<protein>
    <recommendedName>
        <fullName evidence="1">ADP-L-glycero-D-manno-heptose-6-epimerase</fullName>
        <ecNumber evidence="1">5.1.3.20</ecNumber>
    </recommendedName>
    <alternativeName>
        <fullName evidence="1">ADP-L-glycero-beta-D-manno-heptose-6-epimerase</fullName>
        <shortName evidence="1">ADP-glyceromanno-heptose 6-epimerase</shortName>
        <shortName evidence="1">ADP-hep 6-epimerase</shortName>
        <shortName evidence="1">AGME</shortName>
    </alternativeName>
</protein>
<proteinExistence type="inferred from homology"/>
<accession>Q57IC3</accession>
<sequence>MIIVTGGAGFIGSNIVKALNDKGITDILVVDNLKDGTKFVNLVDLNIADYMDKEDFLIQIMSGEELGDIEAIFHEGACSSTTEWDGKYMMDNNYQYSKELLHYCLERGIPFLYASSAATYGGRTSDFIESREYEKPLNVYGYSKFLFDEYVRQILPEANSQIVGFRYFNVYGPREGHKGSMASVAFHLNTQLNNGESPKLFEGSENFKRDFVYVGDVAAVNLWFLESGKSGIFNLGTGRAESFQAVADATLAYHKKGSIEYIPFPDKLKGRYQAFTQADLTNLRNAGYDKPFKTVAEGVTEYMAWLNRDA</sequence>
<evidence type="ECO:0000255" key="1">
    <source>
        <dbReference type="HAMAP-Rule" id="MF_01601"/>
    </source>
</evidence>
<reference key="1">
    <citation type="journal article" date="2005" name="Nucleic Acids Res.">
        <title>The genome sequence of Salmonella enterica serovar Choleraesuis, a highly invasive and resistant zoonotic pathogen.</title>
        <authorList>
            <person name="Chiu C.-H."/>
            <person name="Tang P."/>
            <person name="Chu C."/>
            <person name="Hu S."/>
            <person name="Bao Q."/>
            <person name="Yu J."/>
            <person name="Chou Y.-Y."/>
            <person name="Wang H.-S."/>
            <person name="Lee Y.-S."/>
        </authorList>
    </citation>
    <scope>NUCLEOTIDE SEQUENCE [LARGE SCALE GENOMIC DNA]</scope>
    <source>
        <strain>SC-B67</strain>
    </source>
</reference>
<comment type="function">
    <text evidence="1">Catalyzes the interconversion between ADP-D-glycero-beta-D-manno-heptose and ADP-L-glycero-beta-D-manno-heptose via an epimerization at carbon 6 of the heptose.</text>
</comment>
<comment type="catalytic activity">
    <reaction evidence="1">
        <text>ADP-D-glycero-beta-D-manno-heptose = ADP-L-glycero-beta-D-manno-heptose</text>
        <dbReference type="Rhea" id="RHEA:17577"/>
        <dbReference type="ChEBI" id="CHEBI:59967"/>
        <dbReference type="ChEBI" id="CHEBI:61506"/>
        <dbReference type="EC" id="5.1.3.20"/>
    </reaction>
</comment>
<comment type="cofactor">
    <cofactor evidence="1">
        <name>NADP(+)</name>
        <dbReference type="ChEBI" id="CHEBI:58349"/>
    </cofactor>
    <text evidence="1">Binds 1 NADP(+) per subunit.</text>
</comment>
<comment type="pathway">
    <text evidence="1">Nucleotide-sugar biosynthesis; ADP-L-glycero-beta-D-manno-heptose biosynthesis; ADP-L-glycero-beta-D-manno-heptose from D-glycero-beta-D-manno-heptose 7-phosphate: step 4/4.</text>
</comment>
<comment type="subunit">
    <text evidence="1">Homopentamer.</text>
</comment>
<comment type="domain">
    <text evidence="1">Contains a large N-terminal NADP-binding domain, and a smaller C-terminal substrate-binding domain.</text>
</comment>
<comment type="similarity">
    <text evidence="1">Belongs to the NAD(P)-dependent epimerase/dehydratase family. HldD subfamily.</text>
</comment>
<keyword id="KW-0119">Carbohydrate metabolism</keyword>
<keyword id="KW-0413">Isomerase</keyword>
<keyword id="KW-0521">NADP</keyword>
<gene>
    <name evidence="1" type="primary">hldD</name>
    <name type="ordered locus">SCH_3633</name>
</gene>
<name>HLDD_SALCH</name>
<feature type="chain" id="PRO_0000255740" description="ADP-L-glycero-D-manno-heptose-6-epimerase">
    <location>
        <begin position="1"/>
        <end position="310"/>
    </location>
</feature>
<feature type="active site" description="Proton acceptor" evidence="1">
    <location>
        <position position="140"/>
    </location>
</feature>
<feature type="active site" description="Proton acceptor" evidence="1">
    <location>
        <position position="178"/>
    </location>
</feature>
<feature type="binding site" evidence="1">
    <location>
        <begin position="10"/>
        <end position="11"/>
    </location>
    <ligand>
        <name>NADP(+)</name>
        <dbReference type="ChEBI" id="CHEBI:58349"/>
    </ligand>
</feature>
<feature type="binding site" evidence="1">
    <location>
        <begin position="31"/>
        <end position="32"/>
    </location>
    <ligand>
        <name>NADP(+)</name>
        <dbReference type="ChEBI" id="CHEBI:58349"/>
    </ligand>
</feature>
<feature type="binding site" evidence="1">
    <location>
        <position position="38"/>
    </location>
    <ligand>
        <name>NADP(+)</name>
        <dbReference type="ChEBI" id="CHEBI:58349"/>
    </ligand>
</feature>
<feature type="binding site" evidence="1">
    <location>
        <position position="53"/>
    </location>
    <ligand>
        <name>NADP(+)</name>
        <dbReference type="ChEBI" id="CHEBI:58349"/>
    </ligand>
</feature>
<feature type="binding site" evidence="1">
    <location>
        <begin position="75"/>
        <end position="79"/>
    </location>
    <ligand>
        <name>NADP(+)</name>
        <dbReference type="ChEBI" id="CHEBI:58349"/>
    </ligand>
</feature>
<feature type="binding site" evidence="1">
    <location>
        <position position="92"/>
    </location>
    <ligand>
        <name>NADP(+)</name>
        <dbReference type="ChEBI" id="CHEBI:58349"/>
    </ligand>
</feature>
<feature type="binding site" evidence="1">
    <location>
        <position position="144"/>
    </location>
    <ligand>
        <name>NADP(+)</name>
        <dbReference type="ChEBI" id="CHEBI:58349"/>
    </ligand>
</feature>
<feature type="binding site" evidence="1">
    <location>
        <position position="169"/>
    </location>
    <ligand>
        <name>substrate</name>
    </ligand>
</feature>
<feature type="binding site" evidence="1">
    <location>
        <position position="170"/>
    </location>
    <ligand>
        <name>NADP(+)</name>
        <dbReference type="ChEBI" id="CHEBI:58349"/>
    </ligand>
</feature>
<feature type="binding site" evidence="1">
    <location>
        <position position="178"/>
    </location>
    <ligand>
        <name>NADP(+)</name>
        <dbReference type="ChEBI" id="CHEBI:58349"/>
    </ligand>
</feature>
<feature type="binding site" evidence="1">
    <location>
        <position position="180"/>
    </location>
    <ligand>
        <name>substrate</name>
    </ligand>
</feature>
<feature type="binding site" evidence="1">
    <location>
        <position position="187"/>
    </location>
    <ligand>
        <name>substrate</name>
    </ligand>
</feature>
<feature type="binding site" evidence="1">
    <location>
        <begin position="201"/>
        <end position="204"/>
    </location>
    <ligand>
        <name>substrate</name>
    </ligand>
</feature>
<feature type="binding site" evidence="1">
    <location>
        <position position="209"/>
    </location>
    <ligand>
        <name>substrate</name>
    </ligand>
</feature>
<feature type="binding site" evidence="1">
    <location>
        <position position="272"/>
    </location>
    <ligand>
        <name>substrate</name>
    </ligand>
</feature>
<organism>
    <name type="scientific">Salmonella choleraesuis (strain SC-B67)</name>
    <dbReference type="NCBI Taxonomy" id="321314"/>
    <lineage>
        <taxon>Bacteria</taxon>
        <taxon>Pseudomonadati</taxon>
        <taxon>Pseudomonadota</taxon>
        <taxon>Gammaproteobacteria</taxon>
        <taxon>Enterobacterales</taxon>
        <taxon>Enterobacteriaceae</taxon>
        <taxon>Salmonella</taxon>
    </lineage>
</organism>
<dbReference type="EC" id="5.1.3.20" evidence="1"/>
<dbReference type="EMBL" id="AE017220">
    <property type="protein sequence ID" value="AAX67539.1"/>
    <property type="molecule type" value="Genomic_DNA"/>
</dbReference>
<dbReference type="SMR" id="Q57IC3"/>
<dbReference type="KEGG" id="sec:SCH_3633"/>
<dbReference type="HOGENOM" id="CLU_007383_1_3_6"/>
<dbReference type="UniPathway" id="UPA00356">
    <property type="reaction ID" value="UER00440"/>
</dbReference>
<dbReference type="Proteomes" id="UP000000538">
    <property type="component" value="Chromosome"/>
</dbReference>
<dbReference type="GO" id="GO:0008712">
    <property type="term" value="F:ADP-glyceromanno-heptose 6-epimerase activity"/>
    <property type="evidence" value="ECO:0007669"/>
    <property type="project" value="UniProtKB-UniRule"/>
</dbReference>
<dbReference type="GO" id="GO:0050661">
    <property type="term" value="F:NADP binding"/>
    <property type="evidence" value="ECO:0007669"/>
    <property type="project" value="InterPro"/>
</dbReference>
<dbReference type="GO" id="GO:0097171">
    <property type="term" value="P:ADP-L-glycero-beta-D-manno-heptose biosynthetic process"/>
    <property type="evidence" value="ECO:0007669"/>
    <property type="project" value="UniProtKB-UniPathway"/>
</dbReference>
<dbReference type="GO" id="GO:0005975">
    <property type="term" value="P:carbohydrate metabolic process"/>
    <property type="evidence" value="ECO:0007669"/>
    <property type="project" value="UniProtKB-UniRule"/>
</dbReference>
<dbReference type="CDD" id="cd05248">
    <property type="entry name" value="ADP_GME_SDR_e"/>
    <property type="match status" value="1"/>
</dbReference>
<dbReference type="Gene3D" id="3.40.50.720">
    <property type="entry name" value="NAD(P)-binding Rossmann-like Domain"/>
    <property type="match status" value="1"/>
</dbReference>
<dbReference type="Gene3D" id="3.90.25.10">
    <property type="entry name" value="UDP-galactose 4-epimerase, domain 1"/>
    <property type="match status" value="1"/>
</dbReference>
<dbReference type="HAMAP" id="MF_01601">
    <property type="entry name" value="Heptose_epimerase"/>
    <property type="match status" value="1"/>
</dbReference>
<dbReference type="InterPro" id="IPR001509">
    <property type="entry name" value="Epimerase_deHydtase"/>
</dbReference>
<dbReference type="InterPro" id="IPR011912">
    <property type="entry name" value="Heptose_epim"/>
</dbReference>
<dbReference type="InterPro" id="IPR036291">
    <property type="entry name" value="NAD(P)-bd_dom_sf"/>
</dbReference>
<dbReference type="NCBIfam" id="TIGR02197">
    <property type="entry name" value="heptose_epim"/>
    <property type="match status" value="1"/>
</dbReference>
<dbReference type="NCBIfam" id="NF008360">
    <property type="entry name" value="PRK11150.1"/>
    <property type="match status" value="1"/>
</dbReference>
<dbReference type="PANTHER" id="PTHR43103:SF3">
    <property type="entry name" value="ADP-L-GLYCERO-D-MANNO-HEPTOSE-6-EPIMERASE"/>
    <property type="match status" value="1"/>
</dbReference>
<dbReference type="PANTHER" id="PTHR43103">
    <property type="entry name" value="NUCLEOSIDE-DIPHOSPHATE-SUGAR EPIMERASE"/>
    <property type="match status" value="1"/>
</dbReference>
<dbReference type="Pfam" id="PF01370">
    <property type="entry name" value="Epimerase"/>
    <property type="match status" value="1"/>
</dbReference>
<dbReference type="SUPFAM" id="SSF51735">
    <property type="entry name" value="NAD(P)-binding Rossmann-fold domains"/>
    <property type="match status" value="1"/>
</dbReference>